<feature type="chain" id="PRO_0000263848" description="Translation initiation factor IF-1 3">
    <location>
        <begin position="1"/>
        <end position="73"/>
    </location>
</feature>
<feature type="domain" description="S1-like" evidence="1">
    <location>
        <begin position="1"/>
        <end position="72"/>
    </location>
</feature>
<name>IF13_CUPPJ</name>
<protein>
    <recommendedName>
        <fullName evidence="1">Translation initiation factor IF-1 3</fullName>
    </recommendedName>
</protein>
<proteinExistence type="inferred from homology"/>
<keyword id="KW-0963">Cytoplasm</keyword>
<keyword id="KW-0396">Initiation factor</keyword>
<keyword id="KW-0648">Protein biosynthesis</keyword>
<keyword id="KW-0694">RNA-binding</keyword>
<keyword id="KW-0699">rRNA-binding</keyword>
<evidence type="ECO:0000255" key="1">
    <source>
        <dbReference type="HAMAP-Rule" id="MF_00075"/>
    </source>
</evidence>
<accession>Q46P49</accession>
<sequence length="73" mass="8487">MAKEELVEFGGRVSEVLPDSRFRVTLENGFEVWAYSSGRLKKNRIRILAGDRVTLEMSPYDLTKGRINYRHKV</sequence>
<gene>
    <name evidence="1" type="primary">infA3</name>
    <name type="ordered locus">Reut_B5742</name>
</gene>
<comment type="function">
    <text evidence="1">One of the essential components for the initiation of protein synthesis. Stabilizes the binding of IF-2 and IF-3 on the 30S subunit to which N-formylmethionyl-tRNA(fMet) subsequently binds. Helps modulate mRNA selection, yielding the 30S pre-initiation complex (PIC). Upon addition of the 50S ribosomal subunit IF-1, IF-2 and IF-3 are released leaving the mature 70S translation initiation complex.</text>
</comment>
<comment type="subunit">
    <text evidence="1">Component of the 30S ribosomal translation pre-initiation complex which assembles on the 30S ribosome in the order IF-2 and IF-3, IF-1 and N-formylmethionyl-tRNA(fMet); mRNA recruitment can occur at any time during PIC assembly.</text>
</comment>
<comment type="subcellular location">
    <subcellularLocation>
        <location evidence="1">Cytoplasm</location>
    </subcellularLocation>
</comment>
<comment type="similarity">
    <text evidence="1">Belongs to the IF-1 family.</text>
</comment>
<reference key="1">
    <citation type="journal article" date="2010" name="PLoS ONE">
        <title>The complete multipartite genome sequence of Cupriavidus necator JMP134, a versatile pollutant degrader.</title>
        <authorList>
            <person name="Lykidis A."/>
            <person name="Perez-Pantoja D."/>
            <person name="Ledger T."/>
            <person name="Mavromatis K."/>
            <person name="Anderson I.J."/>
            <person name="Ivanova N.N."/>
            <person name="Hooper S.D."/>
            <person name="Lapidus A."/>
            <person name="Lucas S."/>
            <person name="Gonzalez B."/>
            <person name="Kyrpides N.C."/>
        </authorList>
    </citation>
    <scope>NUCLEOTIDE SEQUENCE [LARGE SCALE GENOMIC DNA]</scope>
    <source>
        <strain>JMP134 / LMG 1197</strain>
    </source>
</reference>
<dbReference type="EMBL" id="CP000091">
    <property type="protein sequence ID" value="AAZ65085.1"/>
    <property type="molecule type" value="Genomic_DNA"/>
</dbReference>
<dbReference type="SMR" id="Q46P49"/>
<dbReference type="STRING" id="264198.Reut_B5742"/>
<dbReference type="KEGG" id="reu:Reut_B5742"/>
<dbReference type="eggNOG" id="COG0361">
    <property type="taxonomic scope" value="Bacteria"/>
</dbReference>
<dbReference type="HOGENOM" id="CLU_151267_1_0_4"/>
<dbReference type="OrthoDB" id="9803250at2"/>
<dbReference type="GO" id="GO:0005829">
    <property type="term" value="C:cytosol"/>
    <property type="evidence" value="ECO:0007669"/>
    <property type="project" value="TreeGrafter"/>
</dbReference>
<dbReference type="GO" id="GO:0043022">
    <property type="term" value="F:ribosome binding"/>
    <property type="evidence" value="ECO:0007669"/>
    <property type="project" value="UniProtKB-UniRule"/>
</dbReference>
<dbReference type="GO" id="GO:0019843">
    <property type="term" value="F:rRNA binding"/>
    <property type="evidence" value="ECO:0007669"/>
    <property type="project" value="UniProtKB-UniRule"/>
</dbReference>
<dbReference type="GO" id="GO:0003743">
    <property type="term" value="F:translation initiation factor activity"/>
    <property type="evidence" value="ECO:0007669"/>
    <property type="project" value="UniProtKB-UniRule"/>
</dbReference>
<dbReference type="CDD" id="cd04451">
    <property type="entry name" value="S1_IF1"/>
    <property type="match status" value="1"/>
</dbReference>
<dbReference type="FunFam" id="2.40.50.140:FF:000002">
    <property type="entry name" value="Translation initiation factor IF-1"/>
    <property type="match status" value="1"/>
</dbReference>
<dbReference type="Gene3D" id="2.40.50.140">
    <property type="entry name" value="Nucleic acid-binding proteins"/>
    <property type="match status" value="1"/>
</dbReference>
<dbReference type="HAMAP" id="MF_00075">
    <property type="entry name" value="IF_1"/>
    <property type="match status" value="1"/>
</dbReference>
<dbReference type="InterPro" id="IPR012340">
    <property type="entry name" value="NA-bd_OB-fold"/>
</dbReference>
<dbReference type="InterPro" id="IPR006196">
    <property type="entry name" value="RNA-binding_domain_S1_IF1"/>
</dbReference>
<dbReference type="InterPro" id="IPR004368">
    <property type="entry name" value="TIF_IF1"/>
</dbReference>
<dbReference type="NCBIfam" id="TIGR00008">
    <property type="entry name" value="infA"/>
    <property type="match status" value="1"/>
</dbReference>
<dbReference type="PANTHER" id="PTHR33370">
    <property type="entry name" value="TRANSLATION INITIATION FACTOR IF-1, CHLOROPLASTIC"/>
    <property type="match status" value="1"/>
</dbReference>
<dbReference type="PANTHER" id="PTHR33370:SF1">
    <property type="entry name" value="TRANSLATION INITIATION FACTOR IF-1, CHLOROPLASTIC"/>
    <property type="match status" value="1"/>
</dbReference>
<dbReference type="Pfam" id="PF01176">
    <property type="entry name" value="eIF-1a"/>
    <property type="match status" value="1"/>
</dbReference>
<dbReference type="SUPFAM" id="SSF50249">
    <property type="entry name" value="Nucleic acid-binding proteins"/>
    <property type="match status" value="1"/>
</dbReference>
<dbReference type="PROSITE" id="PS50832">
    <property type="entry name" value="S1_IF1_TYPE"/>
    <property type="match status" value="1"/>
</dbReference>
<organism>
    <name type="scientific">Cupriavidus pinatubonensis (strain JMP 134 / LMG 1197)</name>
    <name type="common">Cupriavidus necator (strain JMP 134)</name>
    <dbReference type="NCBI Taxonomy" id="264198"/>
    <lineage>
        <taxon>Bacteria</taxon>
        <taxon>Pseudomonadati</taxon>
        <taxon>Pseudomonadota</taxon>
        <taxon>Betaproteobacteria</taxon>
        <taxon>Burkholderiales</taxon>
        <taxon>Burkholderiaceae</taxon>
        <taxon>Cupriavidus</taxon>
    </lineage>
</organism>